<comment type="function">
    <text evidence="1">Has antimicrobial activity against L.lactis, L.innocua, M.luteus, S.aureus, S.epidermidis and S.uberis. Probably acts by disturbing membrane functions with its amphipathic structure. Shows anticancer activity.</text>
</comment>
<comment type="subcellular location">
    <subcellularLocation>
        <location>Secreted</location>
    </subcellularLocation>
</comment>
<comment type="tissue specificity">
    <text>Expressed by the skin dorsal glands.</text>
</comment>
<comment type="similarity">
    <text evidence="2">Belongs to the frog skin active peptide (FSAP) family. Aurein subfamily.</text>
</comment>
<feature type="peptide" id="PRO_0000043724" description="Aurein-3.2">
    <location>
        <begin position="1"/>
        <end position="17"/>
    </location>
</feature>
<feature type="modified residue" description="Isoleucine amide" evidence="1">
    <location>
        <position position="17"/>
    </location>
</feature>
<dbReference type="GO" id="GO:0005576">
    <property type="term" value="C:extracellular region"/>
    <property type="evidence" value="ECO:0007669"/>
    <property type="project" value="UniProtKB-SubCell"/>
</dbReference>
<dbReference type="GO" id="GO:0042742">
    <property type="term" value="P:defense response to bacterium"/>
    <property type="evidence" value="ECO:0007669"/>
    <property type="project" value="UniProtKB-KW"/>
</dbReference>
<dbReference type="InterPro" id="IPR013157">
    <property type="entry name" value="Aurein_antimicrobial_peptide"/>
</dbReference>
<dbReference type="Pfam" id="PF08256">
    <property type="entry name" value="Antimicrobial20"/>
    <property type="match status" value="1"/>
</dbReference>
<keyword id="KW-0027">Amidation</keyword>
<keyword id="KW-0878">Amphibian defense peptide</keyword>
<keyword id="KW-0044">Antibiotic</keyword>
<keyword id="KW-0929">Antimicrobial</keyword>
<keyword id="KW-0903">Direct protein sequencing</keyword>
<keyword id="KW-0964">Secreted</keyword>
<organism>
    <name type="scientific">Ranoidea raniformis</name>
    <name type="common">Southern bell frog</name>
    <name type="synonym">Litoria raniformis</name>
    <dbReference type="NCBI Taxonomy" id="116057"/>
    <lineage>
        <taxon>Eukaryota</taxon>
        <taxon>Metazoa</taxon>
        <taxon>Chordata</taxon>
        <taxon>Craniata</taxon>
        <taxon>Vertebrata</taxon>
        <taxon>Euteleostomi</taxon>
        <taxon>Amphibia</taxon>
        <taxon>Batrachia</taxon>
        <taxon>Anura</taxon>
        <taxon>Neobatrachia</taxon>
        <taxon>Hyloidea</taxon>
        <taxon>Hylidae</taxon>
        <taxon>Pelodryadinae</taxon>
        <taxon>Ranoidea</taxon>
    </lineage>
</organism>
<name>AUR32_RANRN</name>
<reference key="1">
    <citation type="journal article" date="2000" name="Eur. J. Biochem.">
        <title>The antibiotic and anticancer active aurein peptides from the australian bell frogs Litoria aurea and Litoria raniformis the solution structure of aurein 1.2.</title>
        <authorList>
            <person name="Rozek T."/>
            <person name="Wegener K.L."/>
            <person name="Bowie J.H."/>
            <person name="Olver I.N."/>
            <person name="Carver J.A."/>
            <person name="Wallace J.C."/>
            <person name="Tyler M.J."/>
        </authorList>
    </citation>
    <scope>PROTEIN SEQUENCE</scope>
    <scope>AMIDATION AT ILE-17</scope>
    <scope>FUNCTION</scope>
    <source>
        <tissue>Skin secretion</tissue>
    </source>
</reference>
<protein>
    <recommendedName>
        <fullName>Aurein-3.2</fullName>
    </recommendedName>
</protein>
<proteinExistence type="evidence at protein level"/>
<evidence type="ECO:0000269" key="1">
    <source>
    </source>
</evidence>
<evidence type="ECO:0000305" key="2"/>
<accession>P69022</accession>
<accession>P82395</accession>
<sequence>GLFDIVKKIAGHIASSI</sequence>